<reference evidence="7 8" key="1">
    <citation type="journal article" date="2000" name="Dev. Biol.">
        <title>The mesoderm specification factor twist in the life cycle of jellyfish.</title>
        <authorList>
            <person name="Spring J."/>
            <person name="Yanze N."/>
            <person name="Middel A.M."/>
            <person name="Stierwald M."/>
            <person name="Groger H."/>
            <person name="Schmid V."/>
        </authorList>
    </citation>
    <scope>NUCLEOTIDE SEQUENCE [MRNA]</scope>
    <scope>FUNCTION</scope>
    <scope>TISSUE SPECIFICITY</scope>
    <scope>DEVELOPMENTAL STAGE</scope>
</reference>
<organism>
    <name type="scientific">Podocoryna carnea</name>
    <name type="common">Hydrozoan</name>
    <dbReference type="NCBI Taxonomy" id="6096"/>
    <lineage>
        <taxon>Eukaryota</taxon>
        <taxon>Metazoa</taxon>
        <taxon>Cnidaria</taxon>
        <taxon>Hydrozoa</taxon>
        <taxon>Hydroidolina</taxon>
        <taxon>Anthoathecata</taxon>
        <taxon>Filifera</taxon>
        <taxon>Hydractiniidae</taxon>
        <taxon>Podocoryna</taxon>
    </lineage>
</organism>
<gene>
    <name evidence="6" type="primary">TWIST</name>
</gene>
<sequence>MQEHQLSRVTSGNKKKYQSFDDESRDEKRMKCDSTDKLESNSNSKNIYQKTHRVIANIRERQRTQALNQSFSTLRKIIPTLPSDKLSKIQTLRLAAMYIDFLRHVIRRGEINMDSSDETFFSAQERLSYAFSVWRMEGDFYSRDKTAHYFTEQELNLCEYNFHSSFGNRLFYKAGIEAVNSADSDDITCILNTFLEGRI</sequence>
<comment type="function">
    <text evidence="5">Probable transcription factor, which may be responsible for the formation of myoepithelial cells in early muscle development in larva and the formation of non-muscle tissues in later bud stages and mesoderm-like structures in the medusa.</text>
</comment>
<comment type="subunit">
    <text evidence="1">Efficient DNA binding requires dimerization with another bHLH protein. Homodimer (By similarity).</text>
</comment>
<comment type="subcellular location">
    <subcellularLocation>
        <location evidence="2 3">Nucleus</location>
    </subcellularLocation>
</comment>
<comment type="tissue specificity">
    <text evidence="5">Expression is seen at the point of medusa formation in the ectodermal and endodermal bud tissues, and in the entocodon which gives rise to all smooth and striated muscle cells. After the subumbrellar plate differentiates from the endoderm, strong expression is detected until the medusa detaches from the gonzoid. Expression is observed in the distal part of the medusa but diminishes in entocodon-derived muscles as the tissues differentiate, with expression disappearing completely after stage 8. In later stages expression is seen in the distal and proximal parts of the bud and depending on state of maturity, in the developing gonadal tissue.</text>
</comment>
<comment type="developmental stage">
    <text evidence="5">Detected in the embryo and early planula larva stage. It disappears when larvae transform to the polyp stage after 2-3 days. Strong expression is seen in the gonozoid and in all stages of medusa bud development.</text>
</comment>
<dbReference type="EMBL" id="AJ276245">
    <property type="protein sequence ID" value="CAC12667.1"/>
    <property type="molecule type" value="mRNA"/>
</dbReference>
<dbReference type="SMR" id="Q9GNV2"/>
<dbReference type="GO" id="GO:0005634">
    <property type="term" value="C:nucleus"/>
    <property type="evidence" value="ECO:0007669"/>
    <property type="project" value="UniProtKB-SubCell"/>
</dbReference>
<dbReference type="GO" id="GO:0000981">
    <property type="term" value="F:DNA-binding transcription factor activity, RNA polymerase II-specific"/>
    <property type="evidence" value="ECO:0007669"/>
    <property type="project" value="TreeGrafter"/>
</dbReference>
<dbReference type="GO" id="GO:0046983">
    <property type="term" value="F:protein dimerization activity"/>
    <property type="evidence" value="ECO:0007669"/>
    <property type="project" value="InterPro"/>
</dbReference>
<dbReference type="GO" id="GO:0000977">
    <property type="term" value="F:RNA polymerase II transcription regulatory region sequence-specific DNA binding"/>
    <property type="evidence" value="ECO:0007669"/>
    <property type="project" value="TreeGrafter"/>
</dbReference>
<dbReference type="GO" id="GO:0030154">
    <property type="term" value="P:cell differentiation"/>
    <property type="evidence" value="ECO:0007669"/>
    <property type="project" value="UniProtKB-KW"/>
</dbReference>
<dbReference type="Gene3D" id="4.10.280.10">
    <property type="entry name" value="Helix-loop-helix DNA-binding domain"/>
    <property type="match status" value="1"/>
</dbReference>
<dbReference type="InterPro" id="IPR011598">
    <property type="entry name" value="bHLH_dom"/>
</dbReference>
<dbReference type="InterPro" id="IPR050283">
    <property type="entry name" value="E-box_TF_Regulators"/>
</dbReference>
<dbReference type="InterPro" id="IPR036638">
    <property type="entry name" value="HLH_DNA-bd_sf"/>
</dbReference>
<dbReference type="PANTHER" id="PTHR23349">
    <property type="entry name" value="BASIC HELIX-LOOP-HELIX TRANSCRIPTION FACTOR, TWIST"/>
    <property type="match status" value="1"/>
</dbReference>
<dbReference type="PANTHER" id="PTHR23349:SF50">
    <property type="entry name" value="PROTEIN TWIST"/>
    <property type="match status" value="1"/>
</dbReference>
<dbReference type="Pfam" id="PF00010">
    <property type="entry name" value="HLH"/>
    <property type="match status" value="1"/>
</dbReference>
<dbReference type="SMART" id="SM00353">
    <property type="entry name" value="HLH"/>
    <property type="match status" value="1"/>
</dbReference>
<dbReference type="SUPFAM" id="SSF47459">
    <property type="entry name" value="HLH, helix-loop-helix DNA-binding domain"/>
    <property type="match status" value="1"/>
</dbReference>
<dbReference type="PROSITE" id="PS50888">
    <property type="entry name" value="BHLH"/>
    <property type="match status" value="1"/>
</dbReference>
<protein>
    <recommendedName>
        <fullName evidence="1">Twist-related protein</fullName>
    </recommendedName>
</protein>
<keyword id="KW-0217">Developmental protein</keyword>
<keyword id="KW-0221">Differentiation</keyword>
<keyword id="KW-0238">DNA-binding</keyword>
<keyword id="KW-0539">Nucleus</keyword>
<keyword id="KW-0804">Transcription</keyword>
<keyword id="KW-0805">Transcription regulation</keyword>
<feature type="chain" id="PRO_0000389516" description="Twist-related protein">
    <location>
        <begin position="1"/>
        <end position="199"/>
    </location>
</feature>
<feature type="domain" description="bHLH" evidence="3">
    <location>
        <begin position="51"/>
        <end position="102"/>
    </location>
</feature>
<feature type="region of interest" description="Disordered" evidence="4">
    <location>
        <begin position="1"/>
        <end position="43"/>
    </location>
</feature>
<feature type="compositionally biased region" description="Basic and acidic residues" evidence="4">
    <location>
        <begin position="25"/>
        <end position="39"/>
    </location>
</feature>
<name>TWIST_PODCA</name>
<evidence type="ECO:0000250" key="1">
    <source>
        <dbReference type="UniProtKB" id="Q11094"/>
    </source>
</evidence>
<evidence type="ECO:0000250" key="2">
    <source>
        <dbReference type="UniProtKB" id="Q15672"/>
    </source>
</evidence>
<evidence type="ECO:0000255" key="3">
    <source>
        <dbReference type="PROSITE-ProRule" id="PRU00981"/>
    </source>
</evidence>
<evidence type="ECO:0000256" key="4">
    <source>
        <dbReference type="SAM" id="MobiDB-lite"/>
    </source>
</evidence>
<evidence type="ECO:0000269" key="5">
    <source>
    </source>
</evidence>
<evidence type="ECO:0000303" key="6">
    <source>
    </source>
</evidence>
<evidence type="ECO:0000305" key="7"/>
<evidence type="ECO:0000312" key="8">
    <source>
        <dbReference type="EMBL" id="CAC12667.1"/>
    </source>
</evidence>
<proteinExistence type="evidence at transcript level"/>
<accession>Q9GNV2</accession>